<reference key="1">
    <citation type="journal article" date="1989" name="J. Gen. Virol.">
        <title>Characterization of the genetic organization of the HindIII M region of the multicapsid nuclear polyhedrosis virus of Orgyia pseudotsugata reveals major differences among baculoviruses.</title>
        <authorList>
            <person name="Gombart A.F."/>
            <person name="Blissard G.W."/>
            <person name="Rohrmann G.F."/>
        </authorList>
    </citation>
    <scope>NUCLEOTIDE SEQUENCE [GENOMIC DNA]</scope>
</reference>
<reference key="2">
    <citation type="journal article" date="1997" name="Virology">
        <title>The sequence of the Orgyia pseudotsugata multinucleocapsid nuclear polyhedrosis virus genome.</title>
        <authorList>
            <person name="Ahrens C.H."/>
            <person name="Russell R.R."/>
            <person name="Funk C.J."/>
            <person name="Evans J."/>
            <person name="Harwood S."/>
            <person name="Rohrmann G.F."/>
        </authorList>
    </citation>
    <scope>NUCLEOTIDE SEQUENCE [LARGE SCALE GENOMIC DNA]</scope>
</reference>
<proteinExistence type="predicted"/>
<organism>
    <name type="scientific">Orgyia pseudotsugata multicapsid polyhedrosis virus</name>
    <name type="common">OpMNPV</name>
    <dbReference type="NCBI Taxonomy" id="262177"/>
    <lineage>
        <taxon>Viruses</taxon>
        <taxon>Viruses incertae sedis</taxon>
        <taxon>Naldaviricetes</taxon>
        <taxon>Lefavirales</taxon>
        <taxon>Baculoviridae</taxon>
        <taxon>Alphabaculovirus</taxon>
        <taxon>Alphabaculovirus orpseudotsugatae</taxon>
    </lineage>
</organism>
<gene>
    <name type="primary">GP16</name>
    <name type="ORF">ORF128</name>
</gene>
<protein>
    <recommendedName>
        <fullName>GP16 protein</fullName>
    </recommendedName>
</protein>
<sequence>MNFWAAFSACLVGYLVYSGRLNGELQEIKSILIIAYEAADKRYRGVIDEIESLKTDTFMMLSNLQNNTIRTWDAVAKNGKKIANLDERVNGLLAKHAVPALVR</sequence>
<dbReference type="EMBL" id="D13796">
    <property type="protein sequence ID" value="BAA02950.3"/>
    <property type="molecule type" value="Genomic_DNA"/>
</dbReference>
<dbReference type="EMBL" id="D13929">
    <property type="protein sequence ID" value="BAA03028.1"/>
    <property type="molecule type" value="Genomic_DNA"/>
</dbReference>
<dbReference type="EMBL" id="U75930">
    <property type="protein sequence ID" value="AAC59127.1"/>
    <property type="molecule type" value="Genomic_DNA"/>
</dbReference>
<dbReference type="PIR" id="B30857">
    <property type="entry name" value="B30857"/>
</dbReference>
<dbReference type="RefSeq" id="NP_046284.1">
    <property type="nucleotide sequence ID" value="NC_001875.2"/>
</dbReference>
<dbReference type="SMR" id="P24079"/>
<dbReference type="KEGG" id="vg:912070"/>
<dbReference type="OrthoDB" id="18400at10239"/>
<dbReference type="Proteomes" id="UP000009248">
    <property type="component" value="Genome"/>
</dbReference>
<feature type="chain" id="PRO_0000132887" description="GP16 protein">
    <location>
        <begin position="1"/>
        <end position="103"/>
    </location>
</feature>
<accession>P24079</accession>
<organismHost>
    <name type="scientific">Orgyia pseudotsugata</name>
    <name type="common">Douglas-fir tussock moth</name>
    <dbReference type="NCBI Taxonomy" id="33414"/>
</organismHost>
<name>VP16_NPVOP</name>
<keyword id="KW-0426">Late protein</keyword>
<keyword id="KW-1185">Reference proteome</keyword>